<keyword id="KW-0067">ATP-binding</keyword>
<keyword id="KW-0143">Chaperone</keyword>
<keyword id="KW-0963">Cytoplasm</keyword>
<keyword id="KW-0547">Nucleotide-binding</keyword>
<keyword id="KW-1185">Reference proteome</keyword>
<name>HSLU_HELPY</name>
<comment type="function">
    <text evidence="1">ATPase subunit of a proteasome-like degradation complex; this subunit has chaperone activity. The binding of ATP and its subsequent hydrolysis by HslU are essential for unfolding of protein substrates subsequently hydrolyzed by HslV. HslU recognizes the N-terminal part of its protein substrates and unfolds these before they are guided to HslV for hydrolysis.</text>
</comment>
<comment type="subunit">
    <text evidence="1">A double ring-shaped homohexamer of HslV is capped on each side by a ring-shaped HslU homohexamer. The assembly of the HslU/HslV complex is dependent on binding of ATP.</text>
</comment>
<comment type="subcellular location">
    <subcellularLocation>
        <location evidence="1">Cytoplasm</location>
    </subcellularLocation>
</comment>
<comment type="similarity">
    <text evidence="1">Belongs to the ClpX chaperone family. HslU subfamily.</text>
</comment>
<feature type="chain" id="PRO_0000160509" description="ATP-dependent protease ATPase subunit HslU">
    <location>
        <begin position="1"/>
        <end position="443"/>
    </location>
</feature>
<feature type="binding site" evidence="1">
    <location>
        <position position="20"/>
    </location>
    <ligand>
        <name>ATP</name>
        <dbReference type="ChEBI" id="CHEBI:30616"/>
    </ligand>
</feature>
<feature type="binding site" evidence="1">
    <location>
        <begin position="62"/>
        <end position="67"/>
    </location>
    <ligand>
        <name>ATP</name>
        <dbReference type="ChEBI" id="CHEBI:30616"/>
    </ligand>
</feature>
<feature type="binding site" evidence="1">
    <location>
        <position position="255"/>
    </location>
    <ligand>
        <name>ATP</name>
        <dbReference type="ChEBI" id="CHEBI:30616"/>
    </ligand>
</feature>
<feature type="binding site" evidence="1">
    <location>
        <position position="321"/>
    </location>
    <ligand>
        <name>ATP</name>
        <dbReference type="ChEBI" id="CHEBI:30616"/>
    </ligand>
</feature>
<feature type="binding site" evidence="1">
    <location>
        <position position="393"/>
    </location>
    <ligand>
        <name>ATP</name>
        <dbReference type="ChEBI" id="CHEBI:30616"/>
    </ligand>
</feature>
<gene>
    <name evidence="1" type="primary">hslU</name>
    <name type="ordered locus">HP_0516</name>
</gene>
<dbReference type="EMBL" id="AE000511">
    <property type="protein sequence ID" value="AAD07584.1"/>
    <property type="molecule type" value="Genomic_DNA"/>
</dbReference>
<dbReference type="PIR" id="D64584">
    <property type="entry name" value="D64584"/>
</dbReference>
<dbReference type="RefSeq" id="NP_207313.1">
    <property type="nucleotide sequence ID" value="NC_000915.1"/>
</dbReference>
<dbReference type="RefSeq" id="WP_000040764.1">
    <property type="nucleotide sequence ID" value="NC_018939.1"/>
</dbReference>
<dbReference type="SMR" id="O25254"/>
<dbReference type="FunCoup" id="O25254">
    <property type="interactions" value="190"/>
</dbReference>
<dbReference type="STRING" id="85962.HP_0516"/>
<dbReference type="PaxDb" id="85962-C694_02655"/>
<dbReference type="EnsemblBacteria" id="AAD07584">
    <property type="protein sequence ID" value="AAD07584"/>
    <property type="gene ID" value="HP_0516"/>
</dbReference>
<dbReference type="KEGG" id="hpy:HP_0516"/>
<dbReference type="PATRIC" id="fig|85962.8.peg.543"/>
<dbReference type="eggNOG" id="COG1220">
    <property type="taxonomic scope" value="Bacteria"/>
</dbReference>
<dbReference type="InParanoid" id="O25254"/>
<dbReference type="OrthoDB" id="9804062at2"/>
<dbReference type="PhylomeDB" id="O25254"/>
<dbReference type="Proteomes" id="UP000000429">
    <property type="component" value="Chromosome"/>
</dbReference>
<dbReference type="GO" id="GO:0009376">
    <property type="term" value="C:HslUV protease complex"/>
    <property type="evidence" value="ECO:0000318"/>
    <property type="project" value="GO_Central"/>
</dbReference>
<dbReference type="GO" id="GO:0005524">
    <property type="term" value="F:ATP binding"/>
    <property type="evidence" value="ECO:0000318"/>
    <property type="project" value="GO_Central"/>
</dbReference>
<dbReference type="GO" id="GO:0016887">
    <property type="term" value="F:ATP hydrolysis activity"/>
    <property type="evidence" value="ECO:0000318"/>
    <property type="project" value="GO_Central"/>
</dbReference>
<dbReference type="GO" id="GO:0008233">
    <property type="term" value="F:peptidase activity"/>
    <property type="evidence" value="ECO:0007669"/>
    <property type="project" value="InterPro"/>
</dbReference>
<dbReference type="GO" id="GO:0036402">
    <property type="term" value="F:proteasome-activating activity"/>
    <property type="evidence" value="ECO:0007669"/>
    <property type="project" value="UniProtKB-UniRule"/>
</dbReference>
<dbReference type="GO" id="GO:0043335">
    <property type="term" value="P:protein unfolding"/>
    <property type="evidence" value="ECO:0007669"/>
    <property type="project" value="UniProtKB-UniRule"/>
</dbReference>
<dbReference type="GO" id="GO:0051603">
    <property type="term" value="P:proteolysis involved in protein catabolic process"/>
    <property type="evidence" value="ECO:0000318"/>
    <property type="project" value="GO_Central"/>
</dbReference>
<dbReference type="CDD" id="cd19498">
    <property type="entry name" value="RecA-like_HslU"/>
    <property type="match status" value="1"/>
</dbReference>
<dbReference type="Gene3D" id="1.10.8.60">
    <property type="match status" value="1"/>
</dbReference>
<dbReference type="Gene3D" id="3.40.50.300">
    <property type="entry name" value="P-loop containing nucleotide triphosphate hydrolases"/>
    <property type="match status" value="2"/>
</dbReference>
<dbReference type="HAMAP" id="MF_00249">
    <property type="entry name" value="HslU"/>
    <property type="match status" value="1"/>
</dbReference>
<dbReference type="InterPro" id="IPR003593">
    <property type="entry name" value="AAA+_ATPase"/>
</dbReference>
<dbReference type="InterPro" id="IPR050052">
    <property type="entry name" value="ATP-dep_Clp_protease_ClpX"/>
</dbReference>
<dbReference type="InterPro" id="IPR003959">
    <property type="entry name" value="ATPase_AAA_core"/>
</dbReference>
<dbReference type="InterPro" id="IPR019489">
    <property type="entry name" value="Clp_ATPase_C"/>
</dbReference>
<dbReference type="InterPro" id="IPR004491">
    <property type="entry name" value="HslU"/>
</dbReference>
<dbReference type="InterPro" id="IPR027417">
    <property type="entry name" value="P-loop_NTPase"/>
</dbReference>
<dbReference type="NCBIfam" id="TIGR00390">
    <property type="entry name" value="hslU"/>
    <property type="match status" value="1"/>
</dbReference>
<dbReference type="NCBIfam" id="NF003544">
    <property type="entry name" value="PRK05201.1"/>
    <property type="match status" value="1"/>
</dbReference>
<dbReference type="PANTHER" id="PTHR48102">
    <property type="entry name" value="ATP-DEPENDENT CLP PROTEASE ATP-BINDING SUBUNIT CLPX-LIKE, MITOCHONDRIAL-RELATED"/>
    <property type="match status" value="1"/>
</dbReference>
<dbReference type="PANTHER" id="PTHR48102:SF3">
    <property type="entry name" value="ATP-DEPENDENT PROTEASE ATPASE SUBUNIT HSLU"/>
    <property type="match status" value="1"/>
</dbReference>
<dbReference type="Pfam" id="PF00004">
    <property type="entry name" value="AAA"/>
    <property type="match status" value="1"/>
</dbReference>
<dbReference type="Pfam" id="PF07724">
    <property type="entry name" value="AAA_2"/>
    <property type="match status" value="1"/>
</dbReference>
<dbReference type="Pfam" id="PF10431">
    <property type="entry name" value="ClpB_D2-small"/>
    <property type="match status" value="1"/>
</dbReference>
<dbReference type="SMART" id="SM00382">
    <property type="entry name" value="AAA"/>
    <property type="match status" value="1"/>
</dbReference>
<dbReference type="SMART" id="SM01086">
    <property type="entry name" value="ClpB_D2-small"/>
    <property type="match status" value="1"/>
</dbReference>
<dbReference type="SUPFAM" id="SSF52540">
    <property type="entry name" value="P-loop containing nucleoside triphosphate hydrolases"/>
    <property type="match status" value="1"/>
</dbReference>
<accession>O25254</accession>
<evidence type="ECO:0000255" key="1">
    <source>
        <dbReference type="HAMAP-Rule" id="MF_00249"/>
    </source>
</evidence>
<sequence>MSKLNMTPREIVAYLDEYIIGQKEAKKSIAIAFRNRYRRLQLEKSLQEEITPKNILMIGSTGVGKTEIARRIAKIMELPFVKVEASKYTEVGFVGRDVESMVRDLVNNSVLLVENEHKEKLKDKIEEAVIEKIAKKLLPPLPNGVSEEKKQEYANSLLKMQQRIAQGELDSREIEIEVRKKSIEIDSNVPPEILRVQENLIKVFHKEQDKVKKTLSVKEAKEALKAEISDTLLDSEAIKMEGLKRAESSGVIFIDEIDKIAVSSKEGSRQDPSKEGVQRDLLPIVEGSVVNTKYGSIKTEHILFIAAGAFHLSKPSDLIPELQGRFPLRVELENLTEEIMYMILTQTKTSIIKQYQALLKVEGVEIAFEDDAIKELAKLSYNANQKSEDIGARRLHTTIEKVLEDISFEAEDYSGQNVTITKELVQSKLEDLVADENLVKYIL</sequence>
<proteinExistence type="inferred from homology"/>
<reference key="1">
    <citation type="journal article" date="1997" name="Nature">
        <title>The complete genome sequence of the gastric pathogen Helicobacter pylori.</title>
        <authorList>
            <person name="Tomb J.-F."/>
            <person name="White O."/>
            <person name="Kerlavage A.R."/>
            <person name="Clayton R.A."/>
            <person name="Sutton G.G."/>
            <person name="Fleischmann R.D."/>
            <person name="Ketchum K.A."/>
            <person name="Klenk H.-P."/>
            <person name="Gill S.R."/>
            <person name="Dougherty B.A."/>
            <person name="Nelson K.E."/>
            <person name="Quackenbush J."/>
            <person name="Zhou L."/>
            <person name="Kirkness E.F."/>
            <person name="Peterson S.N."/>
            <person name="Loftus B.J."/>
            <person name="Richardson D.L."/>
            <person name="Dodson R.J."/>
            <person name="Khalak H.G."/>
            <person name="Glodek A."/>
            <person name="McKenney K."/>
            <person name="FitzGerald L.M."/>
            <person name="Lee N."/>
            <person name="Adams M.D."/>
            <person name="Hickey E.K."/>
            <person name="Berg D.E."/>
            <person name="Gocayne J.D."/>
            <person name="Utterback T.R."/>
            <person name="Peterson J.D."/>
            <person name="Kelley J.M."/>
            <person name="Cotton M.D."/>
            <person name="Weidman J.F."/>
            <person name="Fujii C."/>
            <person name="Bowman C."/>
            <person name="Watthey L."/>
            <person name="Wallin E."/>
            <person name="Hayes W.S."/>
            <person name="Borodovsky M."/>
            <person name="Karp P.D."/>
            <person name="Smith H.O."/>
            <person name="Fraser C.M."/>
            <person name="Venter J.C."/>
        </authorList>
    </citation>
    <scope>NUCLEOTIDE SEQUENCE [LARGE SCALE GENOMIC DNA]</scope>
    <source>
        <strain>ATCC 700392 / 26695</strain>
    </source>
</reference>
<protein>
    <recommendedName>
        <fullName evidence="1">ATP-dependent protease ATPase subunit HslU</fullName>
    </recommendedName>
    <alternativeName>
        <fullName evidence="1">Unfoldase HslU</fullName>
    </alternativeName>
</protein>
<organism>
    <name type="scientific">Helicobacter pylori (strain ATCC 700392 / 26695)</name>
    <name type="common">Campylobacter pylori</name>
    <dbReference type="NCBI Taxonomy" id="85962"/>
    <lineage>
        <taxon>Bacteria</taxon>
        <taxon>Pseudomonadati</taxon>
        <taxon>Campylobacterota</taxon>
        <taxon>Epsilonproteobacteria</taxon>
        <taxon>Campylobacterales</taxon>
        <taxon>Helicobacteraceae</taxon>
        <taxon>Helicobacter</taxon>
    </lineage>
</organism>